<protein>
    <recommendedName>
        <fullName evidence="1">RNA pyrophosphohydrolase</fullName>
        <ecNumber evidence="1">3.6.1.-</ecNumber>
    </recommendedName>
    <alternativeName>
        <fullName evidence="1">(Di)nucleoside polyphosphate hydrolase</fullName>
    </alternativeName>
</protein>
<comment type="function">
    <text evidence="1">Accelerates the degradation of transcripts by removing pyrophosphate from the 5'-end of triphosphorylated RNA, leading to a more labile monophosphorylated state that can stimulate subsequent ribonuclease cleavage.</text>
</comment>
<comment type="cofactor">
    <cofactor evidence="1">
        <name>a divalent metal cation</name>
        <dbReference type="ChEBI" id="CHEBI:60240"/>
    </cofactor>
</comment>
<comment type="similarity">
    <text evidence="1">Belongs to the Nudix hydrolase family. RppH subfamily.</text>
</comment>
<proteinExistence type="inferred from homology"/>
<accession>Q02U79</accession>
<organism>
    <name type="scientific">Pseudomonas aeruginosa (strain UCBPP-PA14)</name>
    <dbReference type="NCBI Taxonomy" id="208963"/>
    <lineage>
        <taxon>Bacteria</taxon>
        <taxon>Pseudomonadati</taxon>
        <taxon>Pseudomonadota</taxon>
        <taxon>Gammaproteobacteria</taxon>
        <taxon>Pseudomonadales</taxon>
        <taxon>Pseudomonadaceae</taxon>
        <taxon>Pseudomonas</taxon>
    </lineage>
</organism>
<dbReference type="EC" id="3.6.1.-" evidence="1"/>
<dbReference type="EMBL" id="CP000438">
    <property type="protein sequence ID" value="ABJ15300.1"/>
    <property type="molecule type" value="Genomic_DNA"/>
</dbReference>
<dbReference type="RefSeq" id="WP_003084400.1">
    <property type="nucleotide sequence ID" value="NZ_CP034244.1"/>
</dbReference>
<dbReference type="SMR" id="Q02U79"/>
<dbReference type="KEGG" id="pau:PA14_04390"/>
<dbReference type="PseudoCAP" id="PA14_04390"/>
<dbReference type="HOGENOM" id="CLU_087195_3_1_6"/>
<dbReference type="BioCyc" id="PAER208963:G1G74-368-MONOMER"/>
<dbReference type="Proteomes" id="UP000000653">
    <property type="component" value="Chromosome"/>
</dbReference>
<dbReference type="GO" id="GO:0005737">
    <property type="term" value="C:cytoplasm"/>
    <property type="evidence" value="ECO:0007669"/>
    <property type="project" value="TreeGrafter"/>
</dbReference>
<dbReference type="GO" id="GO:0034353">
    <property type="term" value="F:mRNA 5'-diphosphatase activity"/>
    <property type="evidence" value="ECO:0007669"/>
    <property type="project" value="TreeGrafter"/>
</dbReference>
<dbReference type="GO" id="GO:0006402">
    <property type="term" value="P:mRNA catabolic process"/>
    <property type="evidence" value="ECO:0007669"/>
    <property type="project" value="TreeGrafter"/>
</dbReference>
<dbReference type="CDD" id="cd03671">
    <property type="entry name" value="NUDIX_Ap4A_hydrolase_plant_like"/>
    <property type="match status" value="1"/>
</dbReference>
<dbReference type="FunFam" id="3.90.79.10:FF:000001">
    <property type="entry name" value="RNA pyrophosphohydrolase"/>
    <property type="match status" value="1"/>
</dbReference>
<dbReference type="Gene3D" id="3.90.79.10">
    <property type="entry name" value="Nucleoside Triphosphate Pyrophosphohydrolase"/>
    <property type="match status" value="1"/>
</dbReference>
<dbReference type="HAMAP" id="MF_00298">
    <property type="entry name" value="Nudix_RppH"/>
    <property type="match status" value="1"/>
</dbReference>
<dbReference type="InterPro" id="IPR020476">
    <property type="entry name" value="Nudix_hydrolase"/>
</dbReference>
<dbReference type="InterPro" id="IPR015797">
    <property type="entry name" value="NUDIX_hydrolase-like_dom_sf"/>
</dbReference>
<dbReference type="InterPro" id="IPR020084">
    <property type="entry name" value="NUDIX_hydrolase_CS"/>
</dbReference>
<dbReference type="InterPro" id="IPR000086">
    <property type="entry name" value="NUDIX_hydrolase_dom"/>
</dbReference>
<dbReference type="InterPro" id="IPR022927">
    <property type="entry name" value="RppH"/>
</dbReference>
<dbReference type="NCBIfam" id="NF001934">
    <property type="entry name" value="PRK00714.1-1"/>
    <property type="match status" value="1"/>
</dbReference>
<dbReference type="NCBIfam" id="NF001937">
    <property type="entry name" value="PRK00714.1-4"/>
    <property type="match status" value="1"/>
</dbReference>
<dbReference type="NCBIfam" id="NF001938">
    <property type="entry name" value="PRK00714.1-5"/>
    <property type="match status" value="1"/>
</dbReference>
<dbReference type="PANTHER" id="PTHR23114">
    <property type="entry name" value="M7GPPPN-MRNA HYDROLASE"/>
    <property type="match status" value="1"/>
</dbReference>
<dbReference type="PANTHER" id="PTHR23114:SF17">
    <property type="entry name" value="M7GPPPN-MRNA HYDROLASE"/>
    <property type="match status" value="1"/>
</dbReference>
<dbReference type="Pfam" id="PF00293">
    <property type="entry name" value="NUDIX"/>
    <property type="match status" value="1"/>
</dbReference>
<dbReference type="PRINTS" id="PR00502">
    <property type="entry name" value="NUDIXFAMILY"/>
</dbReference>
<dbReference type="SUPFAM" id="SSF55811">
    <property type="entry name" value="Nudix"/>
    <property type="match status" value="1"/>
</dbReference>
<dbReference type="PROSITE" id="PS51462">
    <property type="entry name" value="NUDIX"/>
    <property type="match status" value="1"/>
</dbReference>
<dbReference type="PROSITE" id="PS00893">
    <property type="entry name" value="NUDIX_BOX"/>
    <property type="match status" value="1"/>
</dbReference>
<reference key="1">
    <citation type="journal article" date="2006" name="Genome Biol.">
        <title>Genomic analysis reveals that Pseudomonas aeruginosa virulence is combinatorial.</title>
        <authorList>
            <person name="Lee D.G."/>
            <person name="Urbach J.M."/>
            <person name="Wu G."/>
            <person name="Liberati N.T."/>
            <person name="Feinbaum R.L."/>
            <person name="Miyata S."/>
            <person name="Diggins L.T."/>
            <person name="He J."/>
            <person name="Saucier M."/>
            <person name="Deziel E."/>
            <person name="Friedman L."/>
            <person name="Li L."/>
            <person name="Grills G."/>
            <person name="Montgomery K."/>
            <person name="Kucherlapati R."/>
            <person name="Rahme L.G."/>
            <person name="Ausubel F.M."/>
        </authorList>
    </citation>
    <scope>NUCLEOTIDE SEQUENCE [LARGE SCALE GENOMIC DNA]</scope>
    <source>
        <strain>UCBPP-PA14</strain>
    </source>
</reference>
<name>RPPH_PSEAB</name>
<evidence type="ECO:0000255" key="1">
    <source>
        <dbReference type="HAMAP-Rule" id="MF_00298"/>
    </source>
</evidence>
<gene>
    <name evidence="1" type="primary">rppH</name>
    <name evidence="1" type="synonym">nudH</name>
    <name type="ordered locus">PA14_04390</name>
</gene>
<keyword id="KW-0378">Hydrolase</keyword>
<sequence>MIDSDGFRPNVGIILANEAGQVLWARRINQEAWQFPQGGINDRETPEEALYRELNEEVGLEAGDVRILACTRGWLRYRLPQRLVRTHSQPLCIGQKQKWFLLRLMSDEARVRMDITSKPEFDGWRWVSYWYPLGQVVTFKREVYRRALKELAPRLLARD</sequence>
<feature type="chain" id="PRO_1000021971" description="RNA pyrophosphohydrolase">
    <location>
        <begin position="1"/>
        <end position="159"/>
    </location>
</feature>
<feature type="domain" description="Nudix hydrolase" evidence="1">
    <location>
        <begin position="6"/>
        <end position="149"/>
    </location>
</feature>
<feature type="short sequence motif" description="Nudix box">
    <location>
        <begin position="38"/>
        <end position="59"/>
    </location>
</feature>